<name>RS9_THEAC</name>
<organism>
    <name type="scientific">Thermoplasma acidophilum (strain ATCC 25905 / DSM 1728 / JCM 9062 / NBRC 15155 / AMRC-C165)</name>
    <dbReference type="NCBI Taxonomy" id="273075"/>
    <lineage>
        <taxon>Archaea</taxon>
        <taxon>Methanobacteriati</taxon>
        <taxon>Thermoplasmatota</taxon>
        <taxon>Thermoplasmata</taxon>
        <taxon>Thermoplasmatales</taxon>
        <taxon>Thermoplasmataceae</taxon>
        <taxon>Thermoplasma</taxon>
    </lineage>
</organism>
<keyword id="KW-1185">Reference proteome</keyword>
<keyword id="KW-0687">Ribonucleoprotein</keyword>
<keyword id="KW-0689">Ribosomal protein</keyword>
<dbReference type="EMBL" id="AL445064">
    <property type="protein sequence ID" value="CAC11574.1"/>
    <property type="molecule type" value="Genomic_DNA"/>
</dbReference>
<dbReference type="SMR" id="Q9HL08"/>
<dbReference type="FunCoup" id="Q9HL08">
    <property type="interactions" value="113"/>
</dbReference>
<dbReference type="STRING" id="273075.gene:9571652"/>
<dbReference type="PaxDb" id="273075-Ta0432"/>
<dbReference type="EnsemblBacteria" id="CAC11574">
    <property type="protein sequence ID" value="CAC11574"/>
    <property type="gene ID" value="CAC11574"/>
</dbReference>
<dbReference type="KEGG" id="tac:Ta0432"/>
<dbReference type="eggNOG" id="arCOG04243">
    <property type="taxonomic scope" value="Archaea"/>
</dbReference>
<dbReference type="HOGENOM" id="CLU_046483_4_0_2"/>
<dbReference type="InParanoid" id="Q9HL08"/>
<dbReference type="Proteomes" id="UP000001024">
    <property type="component" value="Chromosome"/>
</dbReference>
<dbReference type="GO" id="GO:0022627">
    <property type="term" value="C:cytosolic small ribosomal subunit"/>
    <property type="evidence" value="ECO:0007669"/>
    <property type="project" value="TreeGrafter"/>
</dbReference>
<dbReference type="GO" id="GO:0003723">
    <property type="term" value="F:RNA binding"/>
    <property type="evidence" value="ECO:0007669"/>
    <property type="project" value="TreeGrafter"/>
</dbReference>
<dbReference type="GO" id="GO:0003735">
    <property type="term" value="F:structural constituent of ribosome"/>
    <property type="evidence" value="ECO:0007669"/>
    <property type="project" value="InterPro"/>
</dbReference>
<dbReference type="GO" id="GO:0000462">
    <property type="term" value="P:maturation of SSU-rRNA from tricistronic rRNA transcript (SSU-rRNA, 5.8S rRNA, LSU-rRNA)"/>
    <property type="evidence" value="ECO:0007669"/>
    <property type="project" value="TreeGrafter"/>
</dbReference>
<dbReference type="GO" id="GO:0006412">
    <property type="term" value="P:translation"/>
    <property type="evidence" value="ECO:0007669"/>
    <property type="project" value="UniProtKB-UniRule"/>
</dbReference>
<dbReference type="Gene3D" id="3.30.230.10">
    <property type="match status" value="1"/>
</dbReference>
<dbReference type="HAMAP" id="MF_00532_A">
    <property type="entry name" value="Ribosomal_uS9_A"/>
    <property type="match status" value="1"/>
</dbReference>
<dbReference type="InterPro" id="IPR020568">
    <property type="entry name" value="Ribosomal_Su5_D2-typ_SF"/>
</dbReference>
<dbReference type="InterPro" id="IPR000754">
    <property type="entry name" value="Ribosomal_uS9"/>
</dbReference>
<dbReference type="InterPro" id="IPR019958">
    <property type="entry name" value="Ribosomal_uS9_archaeal"/>
</dbReference>
<dbReference type="InterPro" id="IPR020574">
    <property type="entry name" value="Ribosomal_uS9_CS"/>
</dbReference>
<dbReference type="InterPro" id="IPR014721">
    <property type="entry name" value="Ribsml_uS5_D2-typ_fold_subgr"/>
</dbReference>
<dbReference type="NCBIfam" id="NF001749">
    <property type="entry name" value="PRK00474.1"/>
    <property type="match status" value="1"/>
</dbReference>
<dbReference type="NCBIfam" id="TIGR03627">
    <property type="entry name" value="uS9_arch"/>
    <property type="match status" value="1"/>
</dbReference>
<dbReference type="PANTHER" id="PTHR21569:SF16">
    <property type="entry name" value="RIBOSOMAL PROTEIN S16"/>
    <property type="match status" value="1"/>
</dbReference>
<dbReference type="PANTHER" id="PTHR21569">
    <property type="entry name" value="RIBOSOMAL PROTEIN S9"/>
    <property type="match status" value="1"/>
</dbReference>
<dbReference type="Pfam" id="PF00380">
    <property type="entry name" value="Ribosomal_S9"/>
    <property type="match status" value="1"/>
</dbReference>
<dbReference type="SUPFAM" id="SSF54211">
    <property type="entry name" value="Ribosomal protein S5 domain 2-like"/>
    <property type="match status" value="1"/>
</dbReference>
<dbReference type="PROSITE" id="PS00360">
    <property type="entry name" value="RIBOSOMAL_S9"/>
    <property type="match status" value="1"/>
</dbReference>
<proteinExistence type="inferred from homology"/>
<reference key="1">
    <citation type="journal article" date="2000" name="Nature">
        <title>The genome sequence of the thermoacidophilic scavenger Thermoplasma acidophilum.</title>
        <authorList>
            <person name="Ruepp A."/>
            <person name="Graml W."/>
            <person name="Santos-Martinez M.-L."/>
            <person name="Koretke K.K."/>
            <person name="Volker C."/>
            <person name="Mewes H.-W."/>
            <person name="Frishman D."/>
            <person name="Stocker S."/>
            <person name="Lupas A.N."/>
            <person name="Baumeister W."/>
        </authorList>
    </citation>
    <scope>NUCLEOTIDE SEQUENCE [LARGE SCALE GENOMIC DNA]</scope>
    <source>
        <strain>ATCC 25905 / DSM 1728 / JCM 9062 / NBRC 15155 / AMRC-C165</strain>
    </source>
</reference>
<protein>
    <recommendedName>
        <fullName evidence="1">Small ribosomal subunit protein uS9</fullName>
    </recommendedName>
    <alternativeName>
        <fullName>30S ribosomal protein S9</fullName>
    </alternativeName>
</protein>
<accession>Q9HL08</accession>
<gene>
    <name type="primary">rps9</name>
    <name type="ordered locus">Ta0432</name>
</gene>
<evidence type="ECO:0000305" key="1"/>
<feature type="chain" id="PRO_0000111477" description="Small ribosomal subunit protein uS9">
    <location>
        <begin position="1"/>
        <end position="129"/>
    </location>
</feature>
<comment type="similarity">
    <text evidence="1">Belongs to the universal ribosomal protein uS9 family.</text>
</comment>
<sequence>MITTGKRKTAVARAVAKKGKGIVTINGYPVELYPVRVLRNKIMEPLLIAEDKAKDLDIAVKVRGGGVTGQADASRTAIARAIVKYLNDTELENLFRQYDRTLIVNDVRIKLPKKAGGRGARAKKQKSYR</sequence>